<gene>
    <name evidence="2" type="primary">adk</name>
    <name type="ordered locus">E2348C_0409</name>
</gene>
<evidence type="ECO:0000250" key="1"/>
<evidence type="ECO:0000255" key="2">
    <source>
        <dbReference type="HAMAP-Rule" id="MF_00235"/>
    </source>
</evidence>
<organism>
    <name type="scientific">Escherichia coli O127:H6 (strain E2348/69 / EPEC)</name>
    <dbReference type="NCBI Taxonomy" id="574521"/>
    <lineage>
        <taxon>Bacteria</taxon>
        <taxon>Pseudomonadati</taxon>
        <taxon>Pseudomonadota</taxon>
        <taxon>Gammaproteobacteria</taxon>
        <taxon>Enterobacterales</taxon>
        <taxon>Enterobacteriaceae</taxon>
        <taxon>Escherichia</taxon>
    </lineage>
</organism>
<accession>B7UKF4</accession>
<name>KAD_ECO27</name>
<feature type="chain" id="PRO_1000191143" description="Adenylate kinase">
    <location>
        <begin position="1"/>
        <end position="214"/>
    </location>
</feature>
<feature type="region of interest" description="NMP" evidence="2">
    <location>
        <begin position="30"/>
        <end position="59"/>
    </location>
</feature>
<feature type="region of interest" description="LID">
    <location>
        <begin position="122"/>
        <end position="159"/>
    </location>
</feature>
<feature type="binding site" evidence="2">
    <location>
        <begin position="10"/>
        <end position="15"/>
    </location>
    <ligand>
        <name>ATP</name>
        <dbReference type="ChEBI" id="CHEBI:30616"/>
    </ligand>
</feature>
<feature type="binding site" evidence="2">
    <location>
        <position position="31"/>
    </location>
    <ligand>
        <name>AMP</name>
        <dbReference type="ChEBI" id="CHEBI:456215"/>
    </ligand>
</feature>
<feature type="binding site" evidence="2">
    <location>
        <position position="36"/>
    </location>
    <ligand>
        <name>AMP</name>
        <dbReference type="ChEBI" id="CHEBI:456215"/>
    </ligand>
</feature>
<feature type="binding site" evidence="2">
    <location>
        <begin position="57"/>
        <end position="59"/>
    </location>
    <ligand>
        <name>AMP</name>
        <dbReference type="ChEBI" id="CHEBI:456215"/>
    </ligand>
</feature>
<feature type="binding site" evidence="2">
    <location>
        <begin position="85"/>
        <end position="88"/>
    </location>
    <ligand>
        <name>AMP</name>
        <dbReference type="ChEBI" id="CHEBI:456215"/>
    </ligand>
</feature>
<feature type="binding site" evidence="2">
    <location>
        <position position="92"/>
    </location>
    <ligand>
        <name>AMP</name>
        <dbReference type="ChEBI" id="CHEBI:456215"/>
    </ligand>
</feature>
<feature type="binding site" evidence="2">
    <location>
        <position position="123"/>
    </location>
    <ligand>
        <name>ATP</name>
        <dbReference type="ChEBI" id="CHEBI:30616"/>
    </ligand>
</feature>
<feature type="binding site" evidence="2">
    <location>
        <begin position="132"/>
        <end position="133"/>
    </location>
    <ligand>
        <name>ATP</name>
        <dbReference type="ChEBI" id="CHEBI:30616"/>
    </ligand>
</feature>
<feature type="binding site" evidence="2">
    <location>
        <position position="156"/>
    </location>
    <ligand>
        <name>AMP</name>
        <dbReference type="ChEBI" id="CHEBI:456215"/>
    </ligand>
</feature>
<feature type="binding site" evidence="2">
    <location>
        <position position="167"/>
    </location>
    <ligand>
        <name>AMP</name>
        <dbReference type="ChEBI" id="CHEBI:456215"/>
    </ligand>
</feature>
<feature type="binding site" evidence="2">
    <location>
        <position position="200"/>
    </location>
    <ligand>
        <name>ATP</name>
        <dbReference type="ChEBI" id="CHEBI:30616"/>
    </ligand>
</feature>
<feature type="modified residue" description="N6-acetyllysine" evidence="1">
    <location>
        <position position="192"/>
    </location>
</feature>
<protein>
    <recommendedName>
        <fullName evidence="2">Adenylate kinase</fullName>
        <shortName evidence="2">AK</shortName>
        <ecNumber evidence="2">2.7.4.3</ecNumber>
    </recommendedName>
    <alternativeName>
        <fullName evidence="2">ATP-AMP transphosphorylase</fullName>
    </alternativeName>
    <alternativeName>
        <fullName evidence="2">ATP:AMP phosphotransferase</fullName>
    </alternativeName>
    <alternativeName>
        <fullName evidence="2">Adenylate monophosphate kinase</fullName>
    </alternativeName>
</protein>
<proteinExistence type="inferred from homology"/>
<sequence>MRIILLGAPGAGKGTQAQFIMEKYGIPQISTGDMLRAAVKSGSELGKQAKDIMDAGKLVTDELVIALVKERIAQEDCRNGFLLDGFPRTIPQADAMKEAGINVDYVLEFDVPDELIVDRIVGRRVHAPSGRVYHVKFNPPKVEGKDDVTGEELTTRKDDQEETVRKRLVEYHQMTAPLIGYYSKEAEAGNTKYAKVDGTKPVAEVRAALEKILG</sequence>
<dbReference type="EC" id="2.7.4.3" evidence="2"/>
<dbReference type="EMBL" id="FM180568">
    <property type="protein sequence ID" value="CAS07957.1"/>
    <property type="molecule type" value="Genomic_DNA"/>
</dbReference>
<dbReference type="RefSeq" id="WP_001313630.1">
    <property type="nucleotide sequence ID" value="NC_011601.1"/>
</dbReference>
<dbReference type="SMR" id="B7UKF4"/>
<dbReference type="GeneID" id="86945388"/>
<dbReference type="KEGG" id="ecg:E2348C_0409"/>
<dbReference type="HOGENOM" id="CLU_032354_1_2_6"/>
<dbReference type="UniPathway" id="UPA00588">
    <property type="reaction ID" value="UER00649"/>
</dbReference>
<dbReference type="Proteomes" id="UP000008205">
    <property type="component" value="Chromosome"/>
</dbReference>
<dbReference type="GO" id="GO:0005737">
    <property type="term" value="C:cytoplasm"/>
    <property type="evidence" value="ECO:0007669"/>
    <property type="project" value="UniProtKB-SubCell"/>
</dbReference>
<dbReference type="GO" id="GO:0004017">
    <property type="term" value="F:adenylate kinase activity"/>
    <property type="evidence" value="ECO:0007669"/>
    <property type="project" value="UniProtKB-UniRule"/>
</dbReference>
<dbReference type="GO" id="GO:0005524">
    <property type="term" value="F:ATP binding"/>
    <property type="evidence" value="ECO:0007669"/>
    <property type="project" value="UniProtKB-UniRule"/>
</dbReference>
<dbReference type="GO" id="GO:0044209">
    <property type="term" value="P:AMP salvage"/>
    <property type="evidence" value="ECO:0007669"/>
    <property type="project" value="UniProtKB-UniRule"/>
</dbReference>
<dbReference type="CDD" id="cd01428">
    <property type="entry name" value="ADK"/>
    <property type="match status" value="1"/>
</dbReference>
<dbReference type="FunFam" id="3.40.50.300:FF:000106">
    <property type="entry name" value="Adenylate kinase mitochondrial"/>
    <property type="match status" value="1"/>
</dbReference>
<dbReference type="Gene3D" id="3.40.50.300">
    <property type="entry name" value="P-loop containing nucleotide triphosphate hydrolases"/>
    <property type="match status" value="1"/>
</dbReference>
<dbReference type="HAMAP" id="MF_00235">
    <property type="entry name" value="Adenylate_kinase_Adk"/>
    <property type="match status" value="1"/>
</dbReference>
<dbReference type="InterPro" id="IPR006259">
    <property type="entry name" value="Adenyl_kin_sub"/>
</dbReference>
<dbReference type="InterPro" id="IPR000850">
    <property type="entry name" value="Adenylat/UMP-CMP_kin"/>
</dbReference>
<dbReference type="InterPro" id="IPR033690">
    <property type="entry name" value="Adenylat_kinase_CS"/>
</dbReference>
<dbReference type="InterPro" id="IPR007862">
    <property type="entry name" value="Adenylate_kinase_lid-dom"/>
</dbReference>
<dbReference type="InterPro" id="IPR027417">
    <property type="entry name" value="P-loop_NTPase"/>
</dbReference>
<dbReference type="NCBIfam" id="TIGR01351">
    <property type="entry name" value="adk"/>
    <property type="match status" value="1"/>
</dbReference>
<dbReference type="NCBIfam" id="NF001379">
    <property type="entry name" value="PRK00279.1-1"/>
    <property type="match status" value="1"/>
</dbReference>
<dbReference type="NCBIfam" id="NF001380">
    <property type="entry name" value="PRK00279.1-2"/>
    <property type="match status" value="1"/>
</dbReference>
<dbReference type="NCBIfam" id="NF001381">
    <property type="entry name" value="PRK00279.1-3"/>
    <property type="match status" value="1"/>
</dbReference>
<dbReference type="NCBIfam" id="NF011100">
    <property type="entry name" value="PRK14527.1"/>
    <property type="match status" value="1"/>
</dbReference>
<dbReference type="PANTHER" id="PTHR23359">
    <property type="entry name" value="NUCLEOTIDE KINASE"/>
    <property type="match status" value="1"/>
</dbReference>
<dbReference type="Pfam" id="PF00406">
    <property type="entry name" value="ADK"/>
    <property type="match status" value="1"/>
</dbReference>
<dbReference type="Pfam" id="PF05191">
    <property type="entry name" value="ADK_lid"/>
    <property type="match status" value="1"/>
</dbReference>
<dbReference type="PRINTS" id="PR00094">
    <property type="entry name" value="ADENYLTKNASE"/>
</dbReference>
<dbReference type="SUPFAM" id="SSF52540">
    <property type="entry name" value="P-loop containing nucleoside triphosphate hydrolases"/>
    <property type="match status" value="1"/>
</dbReference>
<dbReference type="PROSITE" id="PS00113">
    <property type="entry name" value="ADENYLATE_KINASE"/>
    <property type="match status" value="1"/>
</dbReference>
<keyword id="KW-0007">Acetylation</keyword>
<keyword id="KW-0067">ATP-binding</keyword>
<keyword id="KW-0963">Cytoplasm</keyword>
<keyword id="KW-0418">Kinase</keyword>
<keyword id="KW-0545">Nucleotide biosynthesis</keyword>
<keyword id="KW-0547">Nucleotide-binding</keyword>
<keyword id="KW-1185">Reference proteome</keyword>
<keyword id="KW-0808">Transferase</keyword>
<comment type="function">
    <text evidence="2">Catalyzes the reversible transfer of the terminal phosphate group between ATP and AMP. Plays an important role in cellular energy homeostasis and in adenine nucleotide metabolism.</text>
</comment>
<comment type="catalytic activity">
    <reaction evidence="2">
        <text>AMP + ATP = 2 ADP</text>
        <dbReference type="Rhea" id="RHEA:12973"/>
        <dbReference type="ChEBI" id="CHEBI:30616"/>
        <dbReference type="ChEBI" id="CHEBI:456215"/>
        <dbReference type="ChEBI" id="CHEBI:456216"/>
        <dbReference type="EC" id="2.7.4.3"/>
    </reaction>
</comment>
<comment type="pathway">
    <text evidence="2">Purine metabolism; AMP biosynthesis via salvage pathway; AMP from ADP: step 1/1.</text>
</comment>
<comment type="subunit">
    <text evidence="2">Monomer.</text>
</comment>
<comment type="subcellular location">
    <subcellularLocation>
        <location evidence="2">Cytoplasm</location>
    </subcellularLocation>
</comment>
<comment type="domain">
    <text evidence="2">Consists of three domains, a large central CORE domain and two small peripheral domains, NMPbind and LID, which undergo movements during catalysis. The LID domain closes over the site of phosphoryl transfer upon ATP binding. Assembling and dissambling the active center during each catalytic cycle provides an effective means to prevent ATP hydrolysis.</text>
</comment>
<comment type="similarity">
    <text evidence="2">Belongs to the adenylate kinase family.</text>
</comment>
<reference key="1">
    <citation type="journal article" date="2009" name="J. Bacteriol.">
        <title>Complete genome sequence and comparative genome analysis of enteropathogenic Escherichia coli O127:H6 strain E2348/69.</title>
        <authorList>
            <person name="Iguchi A."/>
            <person name="Thomson N.R."/>
            <person name="Ogura Y."/>
            <person name="Saunders D."/>
            <person name="Ooka T."/>
            <person name="Henderson I.R."/>
            <person name="Harris D."/>
            <person name="Asadulghani M."/>
            <person name="Kurokawa K."/>
            <person name="Dean P."/>
            <person name="Kenny B."/>
            <person name="Quail M.A."/>
            <person name="Thurston S."/>
            <person name="Dougan G."/>
            <person name="Hayashi T."/>
            <person name="Parkhill J."/>
            <person name="Frankel G."/>
        </authorList>
    </citation>
    <scope>NUCLEOTIDE SEQUENCE [LARGE SCALE GENOMIC DNA]</scope>
    <source>
        <strain>E2348/69 / EPEC</strain>
    </source>
</reference>